<evidence type="ECO:0000255" key="1">
    <source>
        <dbReference type="HAMAP-Rule" id="MF_00689"/>
    </source>
</evidence>
<keyword id="KW-0012">Acyltransferase</keyword>
<keyword id="KW-0963">Cytoplasm</keyword>
<keyword id="KW-1185">Reference proteome</keyword>
<keyword id="KW-0808">Transferase</keyword>
<proteinExistence type="inferred from homology"/>
<name>BPT_POLSJ</name>
<comment type="function">
    <text evidence="1">Functions in the N-end rule pathway of protein degradation where it conjugates Leu from its aminoacyl-tRNA to the N-termini of proteins containing an N-terminal aspartate or glutamate.</text>
</comment>
<comment type="catalytic activity">
    <reaction evidence="1">
        <text>N-terminal L-glutamyl-[protein] + L-leucyl-tRNA(Leu) = N-terminal L-leucyl-L-glutamyl-[protein] + tRNA(Leu) + H(+)</text>
        <dbReference type="Rhea" id="RHEA:50412"/>
        <dbReference type="Rhea" id="RHEA-COMP:9613"/>
        <dbReference type="Rhea" id="RHEA-COMP:9622"/>
        <dbReference type="Rhea" id="RHEA-COMP:12664"/>
        <dbReference type="Rhea" id="RHEA-COMP:12668"/>
        <dbReference type="ChEBI" id="CHEBI:15378"/>
        <dbReference type="ChEBI" id="CHEBI:64721"/>
        <dbReference type="ChEBI" id="CHEBI:78442"/>
        <dbReference type="ChEBI" id="CHEBI:78494"/>
        <dbReference type="ChEBI" id="CHEBI:133041"/>
        <dbReference type="EC" id="2.3.2.29"/>
    </reaction>
</comment>
<comment type="catalytic activity">
    <reaction evidence="1">
        <text>N-terminal L-aspartyl-[protein] + L-leucyl-tRNA(Leu) = N-terminal L-leucyl-L-aspartyl-[protein] + tRNA(Leu) + H(+)</text>
        <dbReference type="Rhea" id="RHEA:50420"/>
        <dbReference type="Rhea" id="RHEA-COMP:9613"/>
        <dbReference type="Rhea" id="RHEA-COMP:9622"/>
        <dbReference type="Rhea" id="RHEA-COMP:12669"/>
        <dbReference type="Rhea" id="RHEA-COMP:12674"/>
        <dbReference type="ChEBI" id="CHEBI:15378"/>
        <dbReference type="ChEBI" id="CHEBI:64720"/>
        <dbReference type="ChEBI" id="CHEBI:78442"/>
        <dbReference type="ChEBI" id="CHEBI:78494"/>
        <dbReference type="ChEBI" id="CHEBI:133042"/>
        <dbReference type="EC" id="2.3.2.29"/>
    </reaction>
</comment>
<comment type="subcellular location">
    <subcellularLocation>
        <location evidence="1">Cytoplasm</location>
    </subcellularLocation>
</comment>
<comment type="similarity">
    <text evidence="1">Belongs to the R-transferase family. Bpt subfamily.</text>
</comment>
<organism>
    <name type="scientific">Polaromonas sp. (strain JS666 / ATCC BAA-500)</name>
    <dbReference type="NCBI Taxonomy" id="296591"/>
    <lineage>
        <taxon>Bacteria</taxon>
        <taxon>Pseudomonadati</taxon>
        <taxon>Pseudomonadota</taxon>
        <taxon>Betaproteobacteria</taxon>
        <taxon>Burkholderiales</taxon>
        <taxon>Comamonadaceae</taxon>
        <taxon>Polaromonas</taxon>
    </lineage>
</organism>
<dbReference type="EC" id="2.3.2.29" evidence="1"/>
<dbReference type="EMBL" id="CP000316">
    <property type="protein sequence ID" value="ABE44248.1"/>
    <property type="molecule type" value="Genomic_DNA"/>
</dbReference>
<dbReference type="RefSeq" id="WP_011483246.1">
    <property type="nucleotide sequence ID" value="NC_007948.1"/>
</dbReference>
<dbReference type="SMR" id="Q12B44"/>
<dbReference type="STRING" id="296591.Bpro_2325"/>
<dbReference type="KEGG" id="pol:Bpro_2325"/>
<dbReference type="eggNOG" id="COG2935">
    <property type="taxonomic scope" value="Bacteria"/>
</dbReference>
<dbReference type="HOGENOM" id="CLU_077607_0_0_4"/>
<dbReference type="OrthoDB" id="9782022at2"/>
<dbReference type="Proteomes" id="UP000001983">
    <property type="component" value="Chromosome"/>
</dbReference>
<dbReference type="GO" id="GO:0005737">
    <property type="term" value="C:cytoplasm"/>
    <property type="evidence" value="ECO:0007669"/>
    <property type="project" value="UniProtKB-SubCell"/>
</dbReference>
<dbReference type="GO" id="GO:0004057">
    <property type="term" value="F:arginyl-tRNA--protein transferase activity"/>
    <property type="evidence" value="ECO:0007669"/>
    <property type="project" value="InterPro"/>
</dbReference>
<dbReference type="GO" id="GO:0008914">
    <property type="term" value="F:leucyl-tRNA--protein transferase activity"/>
    <property type="evidence" value="ECO:0007669"/>
    <property type="project" value="UniProtKB-UniRule"/>
</dbReference>
<dbReference type="GO" id="GO:0071596">
    <property type="term" value="P:ubiquitin-dependent protein catabolic process via the N-end rule pathway"/>
    <property type="evidence" value="ECO:0007669"/>
    <property type="project" value="InterPro"/>
</dbReference>
<dbReference type="HAMAP" id="MF_00689">
    <property type="entry name" value="Bpt"/>
    <property type="match status" value="1"/>
</dbReference>
<dbReference type="InterPro" id="IPR016181">
    <property type="entry name" value="Acyl_CoA_acyltransferase"/>
</dbReference>
<dbReference type="InterPro" id="IPR017138">
    <property type="entry name" value="Asp_Glu_LeuTrfase"/>
</dbReference>
<dbReference type="InterPro" id="IPR030700">
    <property type="entry name" value="N-end_Aminoacyl_Trfase"/>
</dbReference>
<dbReference type="InterPro" id="IPR007472">
    <property type="entry name" value="N-end_Aminoacyl_Trfase_C"/>
</dbReference>
<dbReference type="InterPro" id="IPR007471">
    <property type="entry name" value="N-end_Aminoacyl_Trfase_N"/>
</dbReference>
<dbReference type="NCBIfam" id="NF002341">
    <property type="entry name" value="PRK01305.1-1"/>
    <property type="match status" value="1"/>
</dbReference>
<dbReference type="NCBIfam" id="NF002342">
    <property type="entry name" value="PRK01305.1-3"/>
    <property type="match status" value="1"/>
</dbReference>
<dbReference type="NCBIfam" id="NF002346">
    <property type="entry name" value="PRK01305.2-3"/>
    <property type="match status" value="1"/>
</dbReference>
<dbReference type="PANTHER" id="PTHR21367">
    <property type="entry name" value="ARGININE-TRNA-PROTEIN TRANSFERASE 1"/>
    <property type="match status" value="1"/>
</dbReference>
<dbReference type="PANTHER" id="PTHR21367:SF1">
    <property type="entry name" value="ARGINYL-TRNA--PROTEIN TRANSFERASE 1"/>
    <property type="match status" value="1"/>
</dbReference>
<dbReference type="Pfam" id="PF04377">
    <property type="entry name" value="ATE_C"/>
    <property type="match status" value="1"/>
</dbReference>
<dbReference type="Pfam" id="PF04376">
    <property type="entry name" value="ATE_N"/>
    <property type="match status" value="1"/>
</dbReference>
<dbReference type="PIRSF" id="PIRSF037208">
    <property type="entry name" value="ATE_pro_prd"/>
    <property type="match status" value="1"/>
</dbReference>
<dbReference type="SUPFAM" id="SSF55729">
    <property type="entry name" value="Acyl-CoA N-acyltransferases (Nat)"/>
    <property type="match status" value="1"/>
</dbReference>
<accession>Q12B44</accession>
<sequence length="254" mass="29218">MTHLKDLPLQTLQFYATAPYPCSYLPGKQARSQVATPSHLIHNDAYSELVTNGFRRSGMFTYRPYCDGCQACVPLRVPVKSFKADRSQRRAWSRHQGMQARVLKLCFMPEHYQLYLRYQNGRHAGGGMDHDSIDQYTQFLLQSRVNSRLVEFRESLPNGEAGALKMVSILDVLEDGISAVYTFYEPDTRASYGNYSVLWQIEQARRLELPYVYLGYWIAQSPKMNYKAGFKPHEILVNGQWTPSDAATRRPKTD</sequence>
<reference key="1">
    <citation type="journal article" date="2008" name="Appl. Environ. Microbiol.">
        <title>The genome of Polaromonas sp. strain JS666: insights into the evolution of a hydrocarbon- and xenobiotic-degrading bacterium, and features of relevance to biotechnology.</title>
        <authorList>
            <person name="Mattes T.E."/>
            <person name="Alexander A.K."/>
            <person name="Richardson P.M."/>
            <person name="Munk A.C."/>
            <person name="Han C.S."/>
            <person name="Stothard P."/>
            <person name="Coleman N.V."/>
        </authorList>
    </citation>
    <scope>NUCLEOTIDE SEQUENCE [LARGE SCALE GENOMIC DNA]</scope>
    <source>
        <strain>JS666 / ATCC BAA-500</strain>
    </source>
</reference>
<gene>
    <name evidence="1" type="primary">bpt</name>
    <name type="ordered locus">Bpro_2325</name>
</gene>
<feature type="chain" id="PRO_0000263199" description="Aspartate/glutamate leucyltransferase">
    <location>
        <begin position="1"/>
        <end position="254"/>
    </location>
</feature>
<protein>
    <recommendedName>
        <fullName evidence="1">Aspartate/glutamate leucyltransferase</fullName>
        <ecNumber evidence="1">2.3.2.29</ecNumber>
    </recommendedName>
</protein>